<organism>
    <name type="scientific">Francisella tularensis subsp. tularensis (strain FSC 198)</name>
    <dbReference type="NCBI Taxonomy" id="393115"/>
    <lineage>
        <taxon>Bacteria</taxon>
        <taxon>Pseudomonadati</taxon>
        <taxon>Pseudomonadota</taxon>
        <taxon>Gammaproteobacteria</taxon>
        <taxon>Thiotrichales</taxon>
        <taxon>Francisellaceae</taxon>
        <taxon>Francisella</taxon>
    </lineage>
</organism>
<keyword id="KW-0963">Cytoplasm</keyword>
<keyword id="KW-0441">Lipid A biosynthesis</keyword>
<keyword id="KW-0444">Lipid biosynthesis</keyword>
<keyword id="KW-0443">Lipid metabolism</keyword>
<keyword id="KW-0456">Lyase</keyword>
<gene>
    <name evidence="1" type="primary">fabZ</name>
    <name type="ordered locus">FTF1570c</name>
</gene>
<sequence>MSQFNQNNKQIDVMGIRKILPHRYPFALLDKIVDWSVEDRTIVAQKNVTINEDFFNGHFPDFPVMPGVLIVEAMAQATAILGELMAETLFAHVVEKAGGGRRTFMLAGIDKVRVKRPVVPGDVLVIESRMVKQKNIICTAESVAKVDGQIVCSAELMAAYKDY</sequence>
<comment type="function">
    <text evidence="1">Involved in unsaturated fatty acids biosynthesis. Catalyzes the dehydration of short chain beta-hydroxyacyl-ACPs and long chain saturated and unsaturated beta-hydroxyacyl-ACPs.</text>
</comment>
<comment type="catalytic activity">
    <reaction evidence="1">
        <text>a (3R)-hydroxyacyl-[ACP] = a (2E)-enoyl-[ACP] + H2O</text>
        <dbReference type="Rhea" id="RHEA:13097"/>
        <dbReference type="Rhea" id="RHEA-COMP:9925"/>
        <dbReference type="Rhea" id="RHEA-COMP:9945"/>
        <dbReference type="ChEBI" id="CHEBI:15377"/>
        <dbReference type="ChEBI" id="CHEBI:78784"/>
        <dbReference type="ChEBI" id="CHEBI:78827"/>
        <dbReference type="EC" id="4.2.1.59"/>
    </reaction>
</comment>
<comment type="subcellular location">
    <subcellularLocation>
        <location evidence="1">Cytoplasm</location>
    </subcellularLocation>
</comment>
<comment type="similarity">
    <text evidence="1">Belongs to the thioester dehydratase family. FabZ subfamily.</text>
</comment>
<evidence type="ECO:0000255" key="1">
    <source>
        <dbReference type="HAMAP-Rule" id="MF_00406"/>
    </source>
</evidence>
<protein>
    <recommendedName>
        <fullName evidence="1">3-hydroxyacyl-[acyl-carrier-protein] dehydratase FabZ</fullName>
        <ecNumber evidence="1">4.2.1.59</ecNumber>
    </recommendedName>
    <alternativeName>
        <fullName evidence="1">(3R)-hydroxymyristoyl-[acyl-carrier-protein] dehydratase</fullName>
        <shortName evidence="1">(3R)-hydroxymyristoyl-ACP dehydrase</shortName>
    </alternativeName>
    <alternativeName>
        <fullName evidence="1">Beta-hydroxyacyl-ACP dehydratase</fullName>
    </alternativeName>
</protein>
<dbReference type="EC" id="4.2.1.59" evidence="1"/>
<dbReference type="EMBL" id="AM286280">
    <property type="protein sequence ID" value="CAL09586.1"/>
    <property type="molecule type" value="Genomic_DNA"/>
</dbReference>
<dbReference type="RefSeq" id="WP_003014877.1">
    <property type="nucleotide sequence ID" value="NC_008245.1"/>
</dbReference>
<dbReference type="SMR" id="Q14G53"/>
<dbReference type="GeneID" id="75264783"/>
<dbReference type="KEGG" id="ftf:FTF1570c"/>
<dbReference type="HOGENOM" id="CLU_078912_1_2_6"/>
<dbReference type="GO" id="GO:0005737">
    <property type="term" value="C:cytoplasm"/>
    <property type="evidence" value="ECO:0007669"/>
    <property type="project" value="UniProtKB-SubCell"/>
</dbReference>
<dbReference type="GO" id="GO:0016020">
    <property type="term" value="C:membrane"/>
    <property type="evidence" value="ECO:0007669"/>
    <property type="project" value="GOC"/>
</dbReference>
<dbReference type="GO" id="GO:0019171">
    <property type="term" value="F:(3R)-hydroxyacyl-[acyl-carrier-protein] dehydratase activity"/>
    <property type="evidence" value="ECO:0007669"/>
    <property type="project" value="UniProtKB-EC"/>
</dbReference>
<dbReference type="GO" id="GO:0006633">
    <property type="term" value="P:fatty acid biosynthetic process"/>
    <property type="evidence" value="ECO:0007669"/>
    <property type="project" value="UniProtKB-UniRule"/>
</dbReference>
<dbReference type="GO" id="GO:0009245">
    <property type="term" value="P:lipid A biosynthetic process"/>
    <property type="evidence" value="ECO:0007669"/>
    <property type="project" value="UniProtKB-UniRule"/>
</dbReference>
<dbReference type="CDD" id="cd01288">
    <property type="entry name" value="FabZ"/>
    <property type="match status" value="1"/>
</dbReference>
<dbReference type="FunFam" id="3.10.129.10:FF:000001">
    <property type="entry name" value="3-hydroxyacyl-[acyl-carrier-protein] dehydratase FabZ"/>
    <property type="match status" value="1"/>
</dbReference>
<dbReference type="Gene3D" id="3.10.129.10">
    <property type="entry name" value="Hotdog Thioesterase"/>
    <property type="match status" value="1"/>
</dbReference>
<dbReference type="HAMAP" id="MF_00406">
    <property type="entry name" value="FabZ"/>
    <property type="match status" value="1"/>
</dbReference>
<dbReference type="InterPro" id="IPR013114">
    <property type="entry name" value="FabA_FabZ"/>
</dbReference>
<dbReference type="InterPro" id="IPR010084">
    <property type="entry name" value="FabZ"/>
</dbReference>
<dbReference type="InterPro" id="IPR029069">
    <property type="entry name" value="HotDog_dom_sf"/>
</dbReference>
<dbReference type="NCBIfam" id="TIGR01750">
    <property type="entry name" value="fabZ"/>
    <property type="match status" value="1"/>
</dbReference>
<dbReference type="NCBIfam" id="NF000582">
    <property type="entry name" value="PRK00006.1"/>
    <property type="match status" value="1"/>
</dbReference>
<dbReference type="PANTHER" id="PTHR30272">
    <property type="entry name" value="3-HYDROXYACYL-[ACYL-CARRIER-PROTEIN] DEHYDRATASE"/>
    <property type="match status" value="1"/>
</dbReference>
<dbReference type="PANTHER" id="PTHR30272:SF1">
    <property type="entry name" value="3-HYDROXYACYL-[ACYL-CARRIER-PROTEIN] DEHYDRATASE"/>
    <property type="match status" value="1"/>
</dbReference>
<dbReference type="Pfam" id="PF07977">
    <property type="entry name" value="FabA"/>
    <property type="match status" value="1"/>
</dbReference>
<dbReference type="SUPFAM" id="SSF54637">
    <property type="entry name" value="Thioesterase/thiol ester dehydrase-isomerase"/>
    <property type="match status" value="1"/>
</dbReference>
<proteinExistence type="inferred from homology"/>
<feature type="chain" id="PRO_0000301895" description="3-hydroxyacyl-[acyl-carrier-protein] dehydratase FabZ">
    <location>
        <begin position="1"/>
        <end position="163"/>
    </location>
</feature>
<feature type="active site" evidence="1">
    <location>
        <position position="58"/>
    </location>
</feature>
<reference key="1">
    <citation type="journal article" date="2007" name="PLoS ONE">
        <title>Genome sequencing shows that European isolates of Francisella tularensis subspecies tularensis are almost identical to US laboratory strain Schu S4.</title>
        <authorList>
            <person name="Chaudhuri R.R."/>
            <person name="Ren C.-P."/>
            <person name="Desmond L."/>
            <person name="Vincent G.A."/>
            <person name="Silman N.J."/>
            <person name="Brehm J.K."/>
            <person name="Elmore M.J."/>
            <person name="Hudson M.J."/>
            <person name="Forsman M."/>
            <person name="Isherwood K.E."/>
            <person name="Gurycova D."/>
            <person name="Minton N.P."/>
            <person name="Titball R.W."/>
            <person name="Pallen M.J."/>
            <person name="Vipond R."/>
        </authorList>
    </citation>
    <scope>NUCLEOTIDE SEQUENCE [LARGE SCALE GENOMIC DNA]</scope>
    <source>
        <strain>FSC 198</strain>
    </source>
</reference>
<accession>Q14G53</accession>
<name>FABZ_FRAT1</name>